<organism>
    <name type="scientific">Deinococcus radiodurans (strain ATCC 13939 / DSM 20539 / JCM 16871 / CCUG 27074 / LMG 4051 / NBRC 15346 / NCIMB 9279 / VKM B-1422 / R1)</name>
    <dbReference type="NCBI Taxonomy" id="243230"/>
    <lineage>
        <taxon>Bacteria</taxon>
        <taxon>Thermotogati</taxon>
        <taxon>Deinococcota</taxon>
        <taxon>Deinococci</taxon>
        <taxon>Deinococcales</taxon>
        <taxon>Deinococcaceae</taxon>
        <taxon>Deinococcus</taxon>
    </lineage>
</organism>
<name>GATC_DEIRA</name>
<sequence length="96" mass="10651">MIDAAQIDHLTALARLELSPAERRTMQQDLTRMLGYFEQLGRVPTEGVQEMQRPVSLVNVLRDDAPGETFPSGVVSALAPETQDGFIRVPRTVDTE</sequence>
<keyword id="KW-0067">ATP-binding</keyword>
<keyword id="KW-0436">Ligase</keyword>
<keyword id="KW-0547">Nucleotide-binding</keyword>
<keyword id="KW-0648">Protein biosynthesis</keyword>
<keyword id="KW-1185">Reference proteome</keyword>
<protein>
    <recommendedName>
        <fullName>Glutamyl-tRNA(Gln) amidotransferase subunit C</fullName>
        <shortName>Glu-ADT subunit C</shortName>
        <ecNumber evidence="1">6.3.5.-</ecNumber>
    </recommendedName>
</protein>
<comment type="function">
    <text evidence="1">Allows the formation of correctly charged Asn-tRNA(Asn) or Gln-tRNA(Gln) through the transamidation of misacylated Asp-tRNA(Asn) or Glu-tRNA(Gln) in organisms which lack either or both of asparaginyl-tRNA or glutaminyl-tRNA synthetases. The reaction takes place in the presence of glutamine and ATP through an activated phospho-Asp-tRNA(Asn) or phospho-Glu-tRNA(Gln).</text>
</comment>
<comment type="catalytic activity">
    <reaction evidence="1">
        <text>L-glutamyl-tRNA(Gln) + L-glutamine + ATP + H2O = L-glutaminyl-tRNA(Gln) + L-glutamate + ADP + phosphate + H(+)</text>
        <dbReference type="Rhea" id="RHEA:17521"/>
        <dbReference type="Rhea" id="RHEA-COMP:9681"/>
        <dbReference type="Rhea" id="RHEA-COMP:9684"/>
        <dbReference type="ChEBI" id="CHEBI:15377"/>
        <dbReference type="ChEBI" id="CHEBI:15378"/>
        <dbReference type="ChEBI" id="CHEBI:29985"/>
        <dbReference type="ChEBI" id="CHEBI:30616"/>
        <dbReference type="ChEBI" id="CHEBI:43474"/>
        <dbReference type="ChEBI" id="CHEBI:58359"/>
        <dbReference type="ChEBI" id="CHEBI:78520"/>
        <dbReference type="ChEBI" id="CHEBI:78521"/>
        <dbReference type="ChEBI" id="CHEBI:456216"/>
    </reaction>
</comment>
<comment type="catalytic activity">
    <reaction evidence="1">
        <text>L-aspartyl-tRNA(Asn) + L-glutamine + ATP + H2O = L-asparaginyl-tRNA(Asn) + L-glutamate + ADP + phosphate + 2 H(+)</text>
        <dbReference type="Rhea" id="RHEA:14513"/>
        <dbReference type="Rhea" id="RHEA-COMP:9674"/>
        <dbReference type="Rhea" id="RHEA-COMP:9677"/>
        <dbReference type="ChEBI" id="CHEBI:15377"/>
        <dbReference type="ChEBI" id="CHEBI:15378"/>
        <dbReference type="ChEBI" id="CHEBI:29985"/>
        <dbReference type="ChEBI" id="CHEBI:30616"/>
        <dbReference type="ChEBI" id="CHEBI:43474"/>
        <dbReference type="ChEBI" id="CHEBI:58359"/>
        <dbReference type="ChEBI" id="CHEBI:78515"/>
        <dbReference type="ChEBI" id="CHEBI:78516"/>
        <dbReference type="ChEBI" id="CHEBI:456216"/>
    </reaction>
</comment>
<comment type="subunit">
    <text evidence="1">Heterotrimer of A, B and C subunits.</text>
</comment>
<comment type="similarity">
    <text evidence="1">Belongs to the GatC family.</text>
</comment>
<dbReference type="EC" id="6.3.5.-" evidence="1"/>
<dbReference type="EMBL" id="AE000513">
    <property type="protein sequence ID" value="AAF10847.1"/>
    <property type="molecule type" value="Genomic_DNA"/>
</dbReference>
<dbReference type="PIR" id="F75414">
    <property type="entry name" value="F75414"/>
</dbReference>
<dbReference type="RefSeq" id="NP_294999.1">
    <property type="nucleotide sequence ID" value="NC_001263.1"/>
</dbReference>
<dbReference type="RefSeq" id="WP_010887918.1">
    <property type="nucleotide sequence ID" value="NC_001263.1"/>
</dbReference>
<dbReference type="SMR" id="Q9RUV6"/>
<dbReference type="FunCoup" id="Q9RUV6">
    <property type="interactions" value="409"/>
</dbReference>
<dbReference type="STRING" id="243230.DR_1275"/>
<dbReference type="PaxDb" id="243230-DR_1275"/>
<dbReference type="EnsemblBacteria" id="AAF10847">
    <property type="protein sequence ID" value="AAF10847"/>
    <property type="gene ID" value="DR_1275"/>
</dbReference>
<dbReference type="GeneID" id="69517523"/>
<dbReference type="KEGG" id="dra:DR_1275"/>
<dbReference type="PATRIC" id="fig|243230.17.peg.1471"/>
<dbReference type="eggNOG" id="COG0721">
    <property type="taxonomic scope" value="Bacteria"/>
</dbReference>
<dbReference type="HOGENOM" id="CLU_105899_1_2_0"/>
<dbReference type="InParanoid" id="Q9RUV6"/>
<dbReference type="OrthoDB" id="9813938at2"/>
<dbReference type="BioCyc" id="MetaCyc:MONOMER-14051"/>
<dbReference type="Proteomes" id="UP000002524">
    <property type="component" value="Chromosome 1"/>
</dbReference>
<dbReference type="GO" id="GO:0050566">
    <property type="term" value="F:asparaginyl-tRNA synthase (glutamine-hydrolyzing) activity"/>
    <property type="evidence" value="ECO:0007669"/>
    <property type="project" value="RHEA"/>
</dbReference>
<dbReference type="GO" id="GO:0005524">
    <property type="term" value="F:ATP binding"/>
    <property type="evidence" value="ECO:0007669"/>
    <property type="project" value="UniProtKB-KW"/>
</dbReference>
<dbReference type="GO" id="GO:0050567">
    <property type="term" value="F:glutaminyl-tRNA synthase (glutamine-hydrolyzing) activity"/>
    <property type="evidence" value="ECO:0007669"/>
    <property type="project" value="UniProtKB-UniRule"/>
</dbReference>
<dbReference type="GO" id="GO:0070681">
    <property type="term" value="P:glutaminyl-tRNAGln biosynthesis via transamidation"/>
    <property type="evidence" value="ECO:0000318"/>
    <property type="project" value="GO_Central"/>
</dbReference>
<dbReference type="GO" id="GO:0006450">
    <property type="term" value="P:regulation of translational fidelity"/>
    <property type="evidence" value="ECO:0007669"/>
    <property type="project" value="InterPro"/>
</dbReference>
<dbReference type="GO" id="GO:0006412">
    <property type="term" value="P:translation"/>
    <property type="evidence" value="ECO:0007669"/>
    <property type="project" value="UniProtKB-UniRule"/>
</dbReference>
<dbReference type="Gene3D" id="1.10.20.60">
    <property type="entry name" value="Glu-tRNAGln amidotransferase C subunit, N-terminal domain"/>
    <property type="match status" value="1"/>
</dbReference>
<dbReference type="HAMAP" id="MF_00122">
    <property type="entry name" value="GatC"/>
    <property type="match status" value="1"/>
</dbReference>
<dbReference type="InterPro" id="IPR036113">
    <property type="entry name" value="Asp/Glu-ADT_sf_sub_c"/>
</dbReference>
<dbReference type="InterPro" id="IPR003837">
    <property type="entry name" value="GatC"/>
</dbReference>
<dbReference type="NCBIfam" id="TIGR00135">
    <property type="entry name" value="gatC"/>
    <property type="match status" value="1"/>
</dbReference>
<dbReference type="PANTHER" id="PTHR15004">
    <property type="entry name" value="GLUTAMYL-TRNA(GLN) AMIDOTRANSFERASE SUBUNIT C, MITOCHONDRIAL"/>
    <property type="match status" value="1"/>
</dbReference>
<dbReference type="PANTHER" id="PTHR15004:SF0">
    <property type="entry name" value="GLUTAMYL-TRNA(GLN) AMIDOTRANSFERASE SUBUNIT C, MITOCHONDRIAL"/>
    <property type="match status" value="1"/>
</dbReference>
<dbReference type="Pfam" id="PF02686">
    <property type="entry name" value="GatC"/>
    <property type="match status" value="1"/>
</dbReference>
<dbReference type="SUPFAM" id="SSF141000">
    <property type="entry name" value="Glu-tRNAGln amidotransferase C subunit"/>
    <property type="match status" value="1"/>
</dbReference>
<accession>Q9RUV6</accession>
<reference key="1">
    <citation type="journal article" date="1999" name="Science">
        <title>Genome sequence of the radioresistant bacterium Deinococcus radiodurans R1.</title>
        <authorList>
            <person name="White O."/>
            <person name="Eisen J.A."/>
            <person name="Heidelberg J.F."/>
            <person name="Hickey E.K."/>
            <person name="Peterson J.D."/>
            <person name="Dodson R.J."/>
            <person name="Haft D.H."/>
            <person name="Gwinn M.L."/>
            <person name="Nelson W.C."/>
            <person name="Richardson D.L."/>
            <person name="Moffat K.S."/>
            <person name="Qin H."/>
            <person name="Jiang L."/>
            <person name="Pamphile W."/>
            <person name="Crosby M."/>
            <person name="Shen M."/>
            <person name="Vamathevan J.J."/>
            <person name="Lam P."/>
            <person name="McDonald L.A."/>
            <person name="Utterback T.R."/>
            <person name="Zalewski C."/>
            <person name="Makarova K.S."/>
            <person name="Aravind L."/>
            <person name="Daly M.J."/>
            <person name="Minton K.W."/>
            <person name="Fleischmann R.D."/>
            <person name="Ketchum K.A."/>
            <person name="Nelson K.E."/>
            <person name="Salzberg S.L."/>
            <person name="Smith H.O."/>
            <person name="Venter J.C."/>
            <person name="Fraser C.M."/>
        </authorList>
    </citation>
    <scope>NUCLEOTIDE SEQUENCE [LARGE SCALE GENOMIC DNA]</scope>
    <source>
        <strain>ATCC 13939 / DSM 20539 / JCM 16871 / CCUG 27074 / LMG 4051 / NBRC 15346 / NCIMB 9279 / VKM B-1422 / R1</strain>
    </source>
</reference>
<feature type="chain" id="PRO_0000105297" description="Glutamyl-tRNA(Gln) amidotransferase subunit C">
    <location>
        <begin position="1"/>
        <end position="96"/>
    </location>
</feature>
<gene>
    <name evidence="1" type="primary">gatC</name>
    <name type="ordered locus">DR_1275</name>
</gene>
<proteinExistence type="inferred from homology"/>
<evidence type="ECO:0000255" key="1">
    <source>
        <dbReference type="HAMAP-Rule" id="MF_00122"/>
    </source>
</evidence>